<proteinExistence type="predicted"/>
<sequence>MDKKAKIYTWSHIILIVFSLVCLHWFFILSITIPNQTGFLINRVGQWINSSSTYAYKIDPRSLFYLNYTLNFNIALNASGIASIVLFICYILTFIFNLIMIGIIRSWRPSLLHLIIAILIWLAILYLFIIIMIKPNFNQIINNSYYTWLKNVIFNDQTLTLNKKNVILNTYINHYHLPIINDPQVALLDISKHQINNENLTFNPSYNYNANLYFTKAKLIYCTYTIIGIIFIISFIYYLSEIIKRCLLVNDNWKIKQHERKDGLNIKKRKNKQEIVAPDPILEEIFKELDL</sequence>
<evidence type="ECO:0000255" key="1"/>
<evidence type="ECO:0000305" key="2"/>
<gene>
    <name type="ordered locus">UU183</name>
</gene>
<comment type="subcellular location">
    <subcellularLocation>
        <location evidence="2">Cell membrane</location>
        <topology evidence="2">Multi-pass membrane protein</topology>
    </subcellularLocation>
</comment>
<accession>Q9PQW0</accession>
<dbReference type="EMBL" id="AF222894">
    <property type="protein sequence ID" value="AAF30590.1"/>
    <property type="molecule type" value="Genomic_DNA"/>
</dbReference>
<dbReference type="RefSeq" id="WP_006688911.1">
    <property type="nucleotide sequence ID" value="NC_002162.1"/>
</dbReference>
<dbReference type="SMR" id="Q9PQW0"/>
<dbReference type="STRING" id="273119.UU183"/>
<dbReference type="EnsemblBacteria" id="AAF30590">
    <property type="protein sequence ID" value="AAF30590"/>
    <property type="gene ID" value="UU183"/>
</dbReference>
<dbReference type="GeneID" id="29672644"/>
<dbReference type="KEGG" id="uur:UU183"/>
<dbReference type="HOGENOM" id="CLU_956277_0_0_14"/>
<dbReference type="OrthoDB" id="404087at2"/>
<dbReference type="Proteomes" id="UP000000423">
    <property type="component" value="Chromosome"/>
</dbReference>
<dbReference type="GO" id="GO:0005886">
    <property type="term" value="C:plasma membrane"/>
    <property type="evidence" value="ECO:0007669"/>
    <property type="project" value="UniProtKB-SubCell"/>
</dbReference>
<organism>
    <name type="scientific">Ureaplasma parvum serovar 3 (strain ATCC 700970)</name>
    <dbReference type="NCBI Taxonomy" id="273119"/>
    <lineage>
        <taxon>Bacteria</taxon>
        <taxon>Bacillati</taxon>
        <taxon>Mycoplasmatota</taxon>
        <taxon>Mycoplasmoidales</taxon>
        <taxon>Mycoplasmoidaceae</taxon>
        <taxon>Ureaplasma</taxon>
    </lineage>
</organism>
<feature type="chain" id="PRO_0000220830" description="Uncharacterized protein UU183">
    <location>
        <begin position="1"/>
        <end position="291"/>
    </location>
</feature>
<feature type="transmembrane region" description="Helical" evidence="1">
    <location>
        <begin position="13"/>
        <end position="33"/>
    </location>
</feature>
<feature type="transmembrane region" description="Helical" evidence="1">
    <location>
        <begin position="84"/>
        <end position="104"/>
    </location>
</feature>
<feature type="transmembrane region" description="Helical" evidence="1">
    <location>
        <begin position="111"/>
        <end position="131"/>
    </location>
</feature>
<feature type="transmembrane region" description="Helical" evidence="1">
    <location>
        <begin position="219"/>
        <end position="239"/>
    </location>
</feature>
<name>Y183_UREPA</name>
<reference key="1">
    <citation type="journal article" date="2000" name="Nature">
        <title>The complete sequence of the mucosal pathogen Ureaplasma urealyticum.</title>
        <authorList>
            <person name="Glass J.I."/>
            <person name="Lefkowitz E.J."/>
            <person name="Glass J.S."/>
            <person name="Heiner C.R."/>
            <person name="Chen E.Y."/>
            <person name="Cassell G.H."/>
        </authorList>
    </citation>
    <scope>NUCLEOTIDE SEQUENCE [LARGE SCALE GENOMIC DNA]</scope>
    <source>
        <strain>ATCC 700970</strain>
    </source>
</reference>
<protein>
    <recommendedName>
        <fullName>Uncharacterized protein UU183</fullName>
    </recommendedName>
</protein>
<keyword id="KW-1003">Cell membrane</keyword>
<keyword id="KW-0472">Membrane</keyword>
<keyword id="KW-1185">Reference proteome</keyword>
<keyword id="KW-0812">Transmembrane</keyword>
<keyword id="KW-1133">Transmembrane helix</keyword>